<dbReference type="EMBL" id="D16825">
    <property type="protein sequence ID" value="BAA04105.1"/>
    <property type="molecule type" value="Genomic_DNA"/>
</dbReference>
<dbReference type="SMR" id="Q53957"/>
<dbReference type="GO" id="GO:0005576">
    <property type="term" value="C:extracellular region"/>
    <property type="evidence" value="ECO:0007669"/>
    <property type="project" value="UniProtKB-SubCell"/>
</dbReference>
<dbReference type="GO" id="GO:0020002">
    <property type="term" value="C:host cell plasma membrane"/>
    <property type="evidence" value="ECO:0007669"/>
    <property type="project" value="UniProtKB-SubCell"/>
</dbReference>
<dbReference type="GO" id="GO:0016020">
    <property type="term" value="C:membrane"/>
    <property type="evidence" value="ECO:0007669"/>
    <property type="project" value="UniProtKB-KW"/>
</dbReference>
<dbReference type="GO" id="GO:0015485">
    <property type="term" value="F:cholesterol binding"/>
    <property type="evidence" value="ECO:0007669"/>
    <property type="project" value="InterPro"/>
</dbReference>
<dbReference type="GO" id="GO:0090729">
    <property type="term" value="F:toxin activity"/>
    <property type="evidence" value="ECO:0007669"/>
    <property type="project" value="UniProtKB-KW"/>
</dbReference>
<dbReference type="GO" id="GO:0031640">
    <property type="term" value="P:killing of cells of another organism"/>
    <property type="evidence" value="ECO:0007669"/>
    <property type="project" value="UniProtKB-KW"/>
</dbReference>
<dbReference type="Gene3D" id="3.30.1040.20">
    <property type="match status" value="1"/>
</dbReference>
<dbReference type="Gene3D" id="3.40.30.40">
    <property type="entry name" value="Perfringolysin"/>
    <property type="match status" value="1"/>
</dbReference>
<dbReference type="Gene3D" id="2.60.40.1430">
    <property type="entry name" value="Perfringolysin, domain 4"/>
    <property type="match status" value="1"/>
</dbReference>
<dbReference type="Gene3D" id="3.90.840.10">
    <property type="entry name" value="Thiol-activated cytolysin superfamily/Thiol-activated cytolysin, alpha-beta domain"/>
    <property type="match status" value="1"/>
</dbReference>
<dbReference type="InterPro" id="IPR035390">
    <property type="entry name" value="Thiol_cytolys_C"/>
</dbReference>
<dbReference type="InterPro" id="IPR038700">
    <property type="entry name" value="Thiol_cytolys_C_sf"/>
</dbReference>
<dbReference type="InterPro" id="IPR001869">
    <property type="entry name" value="Thiol_cytolysin"/>
</dbReference>
<dbReference type="InterPro" id="IPR036363">
    <property type="entry name" value="Thiol_cytolysin_ab_sf"/>
</dbReference>
<dbReference type="InterPro" id="IPR036359">
    <property type="entry name" value="Thiol_cytolysin_sf"/>
</dbReference>
<dbReference type="Pfam" id="PF17440">
    <property type="entry name" value="Thiol_cytolys_C"/>
    <property type="match status" value="1"/>
</dbReference>
<dbReference type="Pfam" id="PF01289">
    <property type="entry name" value="Thiol_cytolysin"/>
    <property type="match status" value="1"/>
</dbReference>
<dbReference type="PRINTS" id="PR01400">
    <property type="entry name" value="TACYTOLYSIN"/>
</dbReference>
<dbReference type="SUPFAM" id="SSF56978">
    <property type="entry name" value="Perfringolysin"/>
    <property type="match status" value="1"/>
</dbReference>
<dbReference type="PROSITE" id="PS00481">
    <property type="entry name" value="THIOL_CYTOLYSINS"/>
    <property type="match status" value="1"/>
</dbReference>
<proteinExistence type="inferred from homology"/>
<sequence>MKDMSNKKIFKKYSRVAGLLTAALIVGNLVTANADSNKQNTANTETTTTNEQPKPESSELTTEKAGQKMDDMLNSNDMIKLAPKEMPLESAEKEEKKSEDNKKSEEDHTEEINDKIYSLNYNELEVLAKNGETIENFVPKEGVKKADKFIVIERKKKNINTTPVDISIIDSVTDRTYPAALQLANKGFTENKPDAVVTKRNPQKIHIDLPGMGDKATVEVNDPTYANVSTAIDNLVNQWHDNYSGGNTLPARTQYTESMVYSKSQIEAALNVNSKILDGTLGIDFKSISKGEKKVMIAAYKQIFYTVSANLPNNPADVFDKSVTFKELQAKGVSNEAPPLFVSNVAYGRTVFVKLETSSKSNDVEAAFSAALKGTDVKTNGKYSDILENSSFTAVVLGADAAEHNKVVTKDFDVIRNVIKANATFSRKNPAYPISYTSVFLKNNKIAGVNNRSEYVETTSTEYTSGKINLSHQGAYVAQYEILWDEINYDDKGKEVITKRRWDNNWYSKTSPFSTVIPLGANSRNIRIMARECTGLAWEWWRKVIDERDVKLSKEINVNISGSTLSPYGSITYK</sequence>
<gene>
    <name type="primary">slo</name>
</gene>
<feature type="signal peptide" evidence="1">
    <location>
        <begin position="1"/>
        <end position="36"/>
    </location>
</feature>
<feature type="chain" id="PRO_0000034105" description="Streptolysin O">
    <location>
        <begin position="37"/>
        <end position="574"/>
    </location>
</feature>
<feature type="transmembrane region" description="Beta stranded" evidence="5">
    <location>
        <begin position="263"/>
        <end position="276"/>
    </location>
</feature>
<feature type="transmembrane region" description="Beta stranded" evidence="5">
    <location>
        <begin position="283"/>
        <end position="292"/>
    </location>
</feature>
<feature type="transmembrane region" description="Beta stranded" evidence="5">
    <location>
        <begin position="361"/>
        <end position="370"/>
    </location>
</feature>
<feature type="transmembrane region" description="Beta stranded" evidence="5">
    <location>
        <begin position="378"/>
        <end position="390"/>
    </location>
</feature>
<feature type="region of interest" description="Disordered" evidence="6">
    <location>
        <begin position="37"/>
        <end position="64"/>
    </location>
</feature>
<feature type="region of interest" description="Disordered" evidence="6">
    <location>
        <begin position="84"/>
        <end position="111"/>
    </location>
</feature>
<feature type="short sequence motif" description="Conserved undecapeptide" evidence="7">
    <location>
        <begin position="532"/>
        <end position="542"/>
    </location>
</feature>
<feature type="short sequence motif" description="Cholesterol binding" evidence="2">
    <location>
        <begin position="564"/>
        <end position="565"/>
    </location>
</feature>
<feature type="compositionally biased region" description="Low complexity" evidence="6">
    <location>
        <begin position="37"/>
        <end position="52"/>
    </location>
</feature>
<feature type="compositionally biased region" description="Basic and acidic residues" evidence="6">
    <location>
        <begin position="53"/>
        <end position="64"/>
    </location>
</feature>
<comment type="function">
    <text evidence="4">A cholesterol-dependent toxin that causes cytolysis by forming pores in cholesterol containing host membranes. After binding to target membranes, the protein undergoes a major conformation change, leading to its insertion in the host membrane and formation of an oligomeric pore complex. Cholesterol is required for binding to host membranes, membrane insertion and pore formation; cholesterol binding is mediated by a Thr-Leu pair in the C-terminus. Can be reversibly inactivated by oxidation.</text>
</comment>
<comment type="subunit">
    <text evidence="5">Homooligomeric pore complex of 35 to 50 subunits; when inserted in the host membrane.</text>
</comment>
<comment type="subcellular location">
    <subcellularLocation>
        <location evidence="3">Secreted</location>
    </subcellularLocation>
    <subcellularLocation>
        <location evidence="4">Host cell membrane</location>
        <topology evidence="5">Multi-pass membrane protein</topology>
    </subcellularLocation>
    <text evidence="3 5">Probably secreted as soluble protein by the accessory Sec system (By similarity). It then inserts into the host cell membrane and forms pores formed by transmembrane beta-strands (By similarity).</text>
</comment>
<comment type="similarity">
    <text evidence="7">Belongs to the cholesterol-dependent cytolysin family.</text>
</comment>
<reference key="1">
    <citation type="journal article" date="1994" name="DNA Seq.">
        <title>Cloning and sequencing the streptolysin O genes of group C and group G streptococci.</title>
        <authorList>
            <person name="Okumura K."/>
            <person name="Hara A."/>
            <person name="Tanaka T."/>
            <person name="Nichiguchi I."/>
            <person name="Minamide W."/>
            <person name="Igarashi H."/>
            <person name="Yutsudo T."/>
        </authorList>
    </citation>
    <scope>NUCLEOTIDE SEQUENCE [GENOMIC DNA]</scope>
</reference>
<keyword id="KW-0204">Cytolysis</keyword>
<keyword id="KW-0354">Hemolysis</keyword>
<keyword id="KW-1032">Host cell membrane</keyword>
<keyword id="KW-1043">Host membrane</keyword>
<keyword id="KW-0446">Lipid-binding</keyword>
<keyword id="KW-0472">Membrane</keyword>
<keyword id="KW-0964">Secreted</keyword>
<keyword id="KW-0732">Signal</keyword>
<keyword id="KW-0800">Toxin</keyword>
<keyword id="KW-0812">Transmembrane</keyword>
<keyword id="KW-1134">Transmembrane beta strand</keyword>
<keyword id="KW-0843">Virulence</keyword>
<accession>Q53957</accession>
<evidence type="ECO:0000250" key="1"/>
<evidence type="ECO:0000250" key="2">
    <source>
        <dbReference type="UniProtKB" id="P0C2E9"/>
    </source>
</evidence>
<evidence type="ECO:0000250" key="3">
    <source>
        <dbReference type="UniProtKB" id="P0C2J9"/>
    </source>
</evidence>
<evidence type="ECO:0000250" key="4">
    <source>
        <dbReference type="UniProtKB" id="P13128"/>
    </source>
</evidence>
<evidence type="ECO:0000250" key="5">
    <source>
        <dbReference type="UniProtKB" id="Q04IN8"/>
    </source>
</evidence>
<evidence type="ECO:0000256" key="6">
    <source>
        <dbReference type="SAM" id="MobiDB-lite"/>
    </source>
</evidence>
<evidence type="ECO:0000305" key="7"/>
<protein>
    <recommendedName>
        <fullName>Streptolysin O</fullName>
        <shortName>SLO</shortName>
    </recommendedName>
    <alternativeName>
        <fullName>Thiol-activated cytolysin</fullName>
    </alternativeName>
</protein>
<name>TACY_STRCB</name>
<organism>
    <name type="scientific">Streptococcus canis</name>
    <dbReference type="NCBI Taxonomy" id="1329"/>
    <lineage>
        <taxon>Bacteria</taxon>
        <taxon>Bacillati</taxon>
        <taxon>Bacillota</taxon>
        <taxon>Bacilli</taxon>
        <taxon>Lactobacillales</taxon>
        <taxon>Streptococcaceae</taxon>
        <taxon>Streptococcus</taxon>
    </lineage>
</organism>